<keyword id="KW-0238">DNA-binding</keyword>
<keyword id="KW-0658">Purine biosynthesis</keyword>
<keyword id="KW-0678">Repressor</keyword>
<keyword id="KW-0804">Transcription</keyword>
<keyword id="KW-0805">Transcription regulation</keyword>
<evidence type="ECO:0000255" key="1">
    <source>
        <dbReference type="HAMAP-Rule" id="MF_01277"/>
    </source>
</evidence>
<gene>
    <name evidence="1" type="primary">purR</name>
    <name type="ordered locus">YPTS_2374</name>
</gene>
<comment type="function">
    <text evidence="1">Is the main repressor of the genes involved in the de novo synthesis of purine nucleotides, regulating purB, purC, purEK, purF, purHD, purL, purMN and guaBA expression. PurR is allosterically activated to bind its cognate DNA by binding the purine corepressors, hypoxanthine or guanine, thereby effecting transcription repression.</text>
</comment>
<comment type="pathway">
    <text>Purine metabolism; purine nucleotide biosynthesis [regulation].</text>
</comment>
<comment type="subunit">
    <text evidence="1">Homodimer.</text>
</comment>
<comment type="domain">
    <text evidence="1">Consists of two structural and functional domains: an N-terminal DNA-binding domain, approximately the first 60 residues, and a larger C-terminal domain, approximately 280 residues, which imparts the function of corepressor binding and oligomerization.</text>
</comment>
<feature type="chain" id="PRO_1000140307" description="HTH-type transcriptional repressor PurR">
    <location>
        <begin position="1"/>
        <end position="341"/>
    </location>
</feature>
<feature type="domain" description="HTH lacI-type" evidence="1">
    <location>
        <begin position="2"/>
        <end position="56"/>
    </location>
</feature>
<feature type="DNA-binding region" description="H-T-H motif" evidence="1">
    <location>
        <begin position="4"/>
        <end position="23"/>
    </location>
</feature>
<feature type="DNA-binding region" evidence="1">
    <location>
        <begin position="48"/>
        <end position="56"/>
    </location>
</feature>
<feature type="binding site" evidence="1">
    <location>
        <position position="73"/>
    </location>
    <ligand>
        <name>hypoxanthine</name>
        <dbReference type="ChEBI" id="CHEBI:17368"/>
    </ligand>
</feature>
<feature type="binding site" evidence="1">
    <location>
        <position position="190"/>
    </location>
    <ligand>
        <name>hypoxanthine</name>
        <dbReference type="ChEBI" id="CHEBI:17368"/>
    </ligand>
</feature>
<feature type="binding site" evidence="1">
    <location>
        <position position="192"/>
    </location>
    <ligand>
        <name>hypoxanthine</name>
        <dbReference type="ChEBI" id="CHEBI:17368"/>
    </ligand>
</feature>
<feature type="binding site" evidence="1">
    <location>
        <position position="221"/>
    </location>
    <ligand>
        <name>hypoxanthine</name>
        <dbReference type="ChEBI" id="CHEBI:17368"/>
    </ligand>
</feature>
<feature type="binding site" evidence="1">
    <location>
        <position position="275"/>
    </location>
    <ligand>
        <name>hypoxanthine</name>
        <dbReference type="ChEBI" id="CHEBI:17368"/>
    </ligand>
</feature>
<dbReference type="EMBL" id="CP001048">
    <property type="protein sequence ID" value="ACC89335.1"/>
    <property type="molecule type" value="Genomic_DNA"/>
</dbReference>
<dbReference type="RefSeq" id="WP_002210943.1">
    <property type="nucleotide sequence ID" value="NZ_CP009780.1"/>
</dbReference>
<dbReference type="SMR" id="B2K5I4"/>
<dbReference type="GeneID" id="57976289"/>
<dbReference type="KEGG" id="ypb:YPTS_2374"/>
<dbReference type="PATRIC" id="fig|502801.10.peg.1778"/>
<dbReference type="UniPathway" id="UPA00488"/>
<dbReference type="GO" id="GO:0003700">
    <property type="term" value="F:DNA-binding transcription factor activity"/>
    <property type="evidence" value="ECO:0007669"/>
    <property type="project" value="TreeGrafter"/>
</dbReference>
<dbReference type="GO" id="GO:0000976">
    <property type="term" value="F:transcription cis-regulatory region binding"/>
    <property type="evidence" value="ECO:0007669"/>
    <property type="project" value="TreeGrafter"/>
</dbReference>
<dbReference type="GO" id="GO:0045892">
    <property type="term" value="P:negative regulation of DNA-templated transcription"/>
    <property type="evidence" value="ECO:0007669"/>
    <property type="project" value="UniProtKB-UniRule"/>
</dbReference>
<dbReference type="GO" id="GO:0006164">
    <property type="term" value="P:purine nucleotide biosynthetic process"/>
    <property type="evidence" value="ECO:0007669"/>
    <property type="project" value="UniProtKB-UniPathway"/>
</dbReference>
<dbReference type="CDD" id="cd01392">
    <property type="entry name" value="HTH_LacI"/>
    <property type="match status" value="1"/>
</dbReference>
<dbReference type="CDD" id="cd06275">
    <property type="entry name" value="PBP1_PurR"/>
    <property type="match status" value="1"/>
</dbReference>
<dbReference type="FunFam" id="1.10.260.40:FF:000002">
    <property type="entry name" value="HTH-type transcriptional repressor PurR"/>
    <property type="match status" value="1"/>
</dbReference>
<dbReference type="FunFam" id="3.40.50.2300:FF:000045">
    <property type="entry name" value="HTH-type transcriptional repressor PurR"/>
    <property type="match status" value="1"/>
</dbReference>
<dbReference type="Gene3D" id="3.40.50.2300">
    <property type="match status" value="2"/>
</dbReference>
<dbReference type="Gene3D" id="1.10.260.40">
    <property type="entry name" value="lambda repressor-like DNA-binding domains"/>
    <property type="match status" value="1"/>
</dbReference>
<dbReference type="HAMAP" id="MF_01277">
    <property type="entry name" value="HTH_type_PurR"/>
    <property type="match status" value="1"/>
</dbReference>
<dbReference type="InterPro" id="IPR000843">
    <property type="entry name" value="HTH_LacI"/>
</dbReference>
<dbReference type="InterPro" id="IPR046335">
    <property type="entry name" value="LacI/GalR-like_sensor"/>
</dbReference>
<dbReference type="InterPro" id="IPR010982">
    <property type="entry name" value="Lambda_DNA-bd_dom_sf"/>
</dbReference>
<dbReference type="InterPro" id="IPR028082">
    <property type="entry name" value="Peripla_BP_I"/>
</dbReference>
<dbReference type="InterPro" id="IPR023588">
    <property type="entry name" value="Tscrpt_reg_HTH_PurR"/>
</dbReference>
<dbReference type="NCBIfam" id="NF007979">
    <property type="entry name" value="PRK10703.1"/>
    <property type="match status" value="1"/>
</dbReference>
<dbReference type="PANTHER" id="PTHR30146:SF148">
    <property type="entry name" value="HTH-TYPE TRANSCRIPTIONAL REPRESSOR PURR-RELATED"/>
    <property type="match status" value="1"/>
</dbReference>
<dbReference type="PANTHER" id="PTHR30146">
    <property type="entry name" value="LACI-RELATED TRANSCRIPTIONAL REPRESSOR"/>
    <property type="match status" value="1"/>
</dbReference>
<dbReference type="Pfam" id="PF00356">
    <property type="entry name" value="LacI"/>
    <property type="match status" value="1"/>
</dbReference>
<dbReference type="Pfam" id="PF13377">
    <property type="entry name" value="Peripla_BP_3"/>
    <property type="match status" value="1"/>
</dbReference>
<dbReference type="PRINTS" id="PR00036">
    <property type="entry name" value="HTHLACI"/>
</dbReference>
<dbReference type="SMART" id="SM00354">
    <property type="entry name" value="HTH_LACI"/>
    <property type="match status" value="1"/>
</dbReference>
<dbReference type="SUPFAM" id="SSF47413">
    <property type="entry name" value="lambda repressor-like DNA-binding domains"/>
    <property type="match status" value="1"/>
</dbReference>
<dbReference type="SUPFAM" id="SSF53822">
    <property type="entry name" value="Periplasmic binding protein-like I"/>
    <property type="match status" value="1"/>
</dbReference>
<dbReference type="PROSITE" id="PS00356">
    <property type="entry name" value="HTH_LACI_1"/>
    <property type="match status" value="1"/>
</dbReference>
<dbReference type="PROSITE" id="PS50932">
    <property type="entry name" value="HTH_LACI_2"/>
    <property type="match status" value="1"/>
</dbReference>
<accession>B2K5I4</accession>
<reference key="1">
    <citation type="submission" date="2008-04" db="EMBL/GenBank/DDBJ databases">
        <title>Complete sequence of Yersinia pseudotuberculosis PB1/+.</title>
        <authorList>
            <person name="Copeland A."/>
            <person name="Lucas S."/>
            <person name="Lapidus A."/>
            <person name="Glavina del Rio T."/>
            <person name="Dalin E."/>
            <person name="Tice H."/>
            <person name="Bruce D."/>
            <person name="Goodwin L."/>
            <person name="Pitluck S."/>
            <person name="Munk A.C."/>
            <person name="Brettin T."/>
            <person name="Detter J.C."/>
            <person name="Han C."/>
            <person name="Tapia R."/>
            <person name="Schmutz J."/>
            <person name="Larimer F."/>
            <person name="Land M."/>
            <person name="Hauser L."/>
            <person name="Challacombe J.F."/>
            <person name="Green L."/>
            <person name="Lindler L.E."/>
            <person name="Nikolich M.P."/>
            <person name="Richardson P."/>
        </authorList>
    </citation>
    <scope>NUCLEOTIDE SEQUENCE [LARGE SCALE GENOMIC DNA]</scope>
    <source>
        <strain>PB1/+</strain>
    </source>
</reference>
<name>PURR_YERPB</name>
<proteinExistence type="inferred from homology"/>
<organism>
    <name type="scientific">Yersinia pseudotuberculosis serotype IB (strain PB1/+)</name>
    <dbReference type="NCBI Taxonomy" id="502801"/>
    <lineage>
        <taxon>Bacteria</taxon>
        <taxon>Pseudomonadati</taxon>
        <taxon>Pseudomonadota</taxon>
        <taxon>Gammaproteobacteria</taxon>
        <taxon>Enterobacterales</taxon>
        <taxon>Yersiniaceae</taxon>
        <taxon>Yersinia</taxon>
    </lineage>
</organism>
<sequence length="341" mass="37839">MATIKDVAKHAGVSTTTVSHVINKTRFVAENTKAAVWAAIKELHYSPSAVARSLKVNHTKSIGLLATSSEAPYFAEVIEAVENSCYSKGYTLILCNSHNNLDKQKAYLAMLAQKRVDGLLVMCSEYPDQLLGMLEDYRNIPMVVMDWGTARGDFTDSIIDNAFEGGYLAGRYLIERGHRDIGAIPGQLARNTGGGRHQGFLKALEEANIPVREEWIVQGDFEPESGYKAMHQILTQKHRPTAVFCGGDIMAMGAICAADELGLRVPQDISVIGYDNVRNARYFSPALTTIHQPKERLGETAFAMLLDRIVSKREDPQTIEVHPKLVERRSVADGPFRDYRR</sequence>
<protein>
    <recommendedName>
        <fullName evidence="1">HTH-type transcriptional repressor PurR</fullName>
    </recommendedName>
    <alternativeName>
        <fullName evidence="1">Pur regulon repressor</fullName>
    </alternativeName>
    <alternativeName>
        <fullName evidence="1">Purine nucleotide synthesis repressor</fullName>
    </alternativeName>
</protein>